<dbReference type="EMBL" id="CP000941">
    <property type="protein sequence ID" value="ACA11127.1"/>
    <property type="molecule type" value="Genomic_DNA"/>
</dbReference>
<dbReference type="RefSeq" id="WP_004085543.1">
    <property type="nucleotide sequence ID" value="NC_010513.1"/>
</dbReference>
<dbReference type="SMR" id="B0U288"/>
<dbReference type="KEGG" id="xfm:Xfasm12_0087"/>
<dbReference type="HOGENOM" id="CLU_100590_5_1_6"/>
<dbReference type="GO" id="GO:0005737">
    <property type="term" value="C:cytoplasm"/>
    <property type="evidence" value="ECO:0007669"/>
    <property type="project" value="UniProtKB-ARBA"/>
</dbReference>
<dbReference type="GO" id="GO:0015935">
    <property type="term" value="C:small ribosomal subunit"/>
    <property type="evidence" value="ECO:0007669"/>
    <property type="project" value="TreeGrafter"/>
</dbReference>
<dbReference type="GO" id="GO:0003735">
    <property type="term" value="F:structural constituent of ribosome"/>
    <property type="evidence" value="ECO:0007669"/>
    <property type="project" value="InterPro"/>
</dbReference>
<dbReference type="GO" id="GO:0006412">
    <property type="term" value="P:translation"/>
    <property type="evidence" value="ECO:0007669"/>
    <property type="project" value="UniProtKB-UniRule"/>
</dbReference>
<dbReference type="FunFam" id="3.30.1320.10:FF:000008">
    <property type="entry name" value="30S ribosomal protein S16"/>
    <property type="match status" value="1"/>
</dbReference>
<dbReference type="Gene3D" id="3.30.1320.10">
    <property type="match status" value="1"/>
</dbReference>
<dbReference type="HAMAP" id="MF_00385">
    <property type="entry name" value="Ribosomal_bS16"/>
    <property type="match status" value="1"/>
</dbReference>
<dbReference type="InterPro" id="IPR000307">
    <property type="entry name" value="Ribosomal_bS16"/>
</dbReference>
<dbReference type="InterPro" id="IPR020592">
    <property type="entry name" value="Ribosomal_bS16_CS"/>
</dbReference>
<dbReference type="InterPro" id="IPR023803">
    <property type="entry name" value="Ribosomal_bS16_dom_sf"/>
</dbReference>
<dbReference type="NCBIfam" id="TIGR00002">
    <property type="entry name" value="S16"/>
    <property type="match status" value="1"/>
</dbReference>
<dbReference type="PANTHER" id="PTHR12919">
    <property type="entry name" value="30S RIBOSOMAL PROTEIN S16"/>
    <property type="match status" value="1"/>
</dbReference>
<dbReference type="PANTHER" id="PTHR12919:SF20">
    <property type="entry name" value="SMALL RIBOSOMAL SUBUNIT PROTEIN BS16M"/>
    <property type="match status" value="1"/>
</dbReference>
<dbReference type="Pfam" id="PF00886">
    <property type="entry name" value="Ribosomal_S16"/>
    <property type="match status" value="1"/>
</dbReference>
<dbReference type="SUPFAM" id="SSF54565">
    <property type="entry name" value="Ribosomal protein S16"/>
    <property type="match status" value="1"/>
</dbReference>
<dbReference type="PROSITE" id="PS00732">
    <property type="entry name" value="RIBOSOMAL_S16"/>
    <property type="match status" value="1"/>
</dbReference>
<reference key="1">
    <citation type="journal article" date="2010" name="J. Bacteriol.">
        <title>Whole genome sequences of two Xylella fastidiosa strains (M12 and M23) causing almond leaf scorch disease in California.</title>
        <authorList>
            <person name="Chen J."/>
            <person name="Xie G."/>
            <person name="Han S."/>
            <person name="Chertkov O."/>
            <person name="Sims D."/>
            <person name="Civerolo E.L."/>
        </authorList>
    </citation>
    <scope>NUCLEOTIDE SEQUENCE [LARGE SCALE GENOMIC DNA]</scope>
    <source>
        <strain>M12</strain>
    </source>
</reference>
<comment type="similarity">
    <text evidence="1">Belongs to the bacterial ribosomal protein bS16 family.</text>
</comment>
<evidence type="ECO:0000255" key="1">
    <source>
        <dbReference type="HAMAP-Rule" id="MF_00385"/>
    </source>
</evidence>
<evidence type="ECO:0000305" key="2"/>
<name>RS16_XYLFM</name>
<keyword id="KW-0687">Ribonucleoprotein</keyword>
<keyword id="KW-0689">Ribosomal protein</keyword>
<feature type="chain" id="PRO_1000122602" description="Small ribosomal subunit protein bS16">
    <location>
        <begin position="1"/>
        <end position="86"/>
    </location>
</feature>
<proteinExistence type="inferred from homology"/>
<protein>
    <recommendedName>
        <fullName evidence="1">Small ribosomal subunit protein bS16</fullName>
    </recommendedName>
    <alternativeName>
        <fullName evidence="2">30S ribosomal protein S16</fullName>
    </alternativeName>
</protein>
<accession>B0U288</accession>
<sequence length="86" mass="9727">MVKIRLTRGGAKKRPFYQIIVTDSRNKRDGRNIERVGHYNPVAQGAESRVVLNVARVEHWVRNGAQLTDKVRSLLKEVSKTQATAS</sequence>
<gene>
    <name evidence="1" type="primary">rpsP</name>
    <name type="ordered locus">Xfasm12_0087</name>
</gene>
<organism>
    <name type="scientific">Xylella fastidiosa (strain M12)</name>
    <dbReference type="NCBI Taxonomy" id="405440"/>
    <lineage>
        <taxon>Bacteria</taxon>
        <taxon>Pseudomonadati</taxon>
        <taxon>Pseudomonadota</taxon>
        <taxon>Gammaproteobacteria</taxon>
        <taxon>Lysobacterales</taxon>
        <taxon>Lysobacteraceae</taxon>
        <taxon>Xylella</taxon>
    </lineage>
</organism>